<dbReference type="EMBL" id="CP000480">
    <property type="protein sequence ID" value="ABK73437.1"/>
    <property type="molecule type" value="Genomic_DNA"/>
</dbReference>
<dbReference type="EMBL" id="CP001663">
    <property type="protein sequence ID" value="AFP36988.1"/>
    <property type="molecule type" value="Genomic_DNA"/>
</dbReference>
<dbReference type="RefSeq" id="WP_003891919.1">
    <property type="nucleotide sequence ID" value="NZ_SIJM01000025.1"/>
</dbReference>
<dbReference type="RefSeq" id="YP_884932.1">
    <property type="nucleotide sequence ID" value="NC_008596.1"/>
</dbReference>
<dbReference type="SMR" id="A0QPU4"/>
<dbReference type="STRING" id="246196.MSMEG_0520"/>
<dbReference type="PaxDb" id="246196-MSMEI_0507"/>
<dbReference type="KEGG" id="msb:LJ00_02575"/>
<dbReference type="KEGG" id="msg:MSMEI_0507"/>
<dbReference type="KEGG" id="msm:MSMEG_0520"/>
<dbReference type="PATRIC" id="fig|246196.19.peg.516"/>
<dbReference type="eggNOG" id="ENOG5031B57">
    <property type="taxonomic scope" value="Bacteria"/>
</dbReference>
<dbReference type="OrthoDB" id="4569497at2"/>
<dbReference type="Proteomes" id="UP000000757">
    <property type="component" value="Chromosome"/>
</dbReference>
<dbReference type="Proteomes" id="UP000006158">
    <property type="component" value="Chromosome"/>
</dbReference>
<dbReference type="GO" id="GO:0009279">
    <property type="term" value="C:cell outer membrane"/>
    <property type="evidence" value="ECO:0007669"/>
    <property type="project" value="UniProtKB-SubCell"/>
</dbReference>
<dbReference type="GO" id="GO:0005576">
    <property type="term" value="C:extracellular region"/>
    <property type="evidence" value="ECO:0007669"/>
    <property type="project" value="UniProtKB-KW"/>
</dbReference>
<dbReference type="GO" id="GO:0046930">
    <property type="term" value="C:pore complex"/>
    <property type="evidence" value="ECO:0007669"/>
    <property type="project" value="UniProtKB-KW"/>
</dbReference>
<dbReference type="GO" id="GO:0015288">
    <property type="term" value="F:porin activity"/>
    <property type="evidence" value="ECO:0007669"/>
    <property type="project" value="UniProtKB-KW"/>
</dbReference>
<dbReference type="GO" id="GO:0006811">
    <property type="term" value="P:monoatomic ion transport"/>
    <property type="evidence" value="ECO:0007669"/>
    <property type="project" value="UniProtKB-KW"/>
</dbReference>
<dbReference type="Gene3D" id="2.60.40.1650">
    <property type="entry name" value="Porin MspA (Ig-like beta-sandwich domain)"/>
    <property type="match status" value="1"/>
</dbReference>
<dbReference type="Gene3D" id="2.10.300.10">
    <property type="entry name" value="Porin MspA ribbon domain"/>
    <property type="match status" value="1"/>
</dbReference>
<dbReference type="InterPro" id="IPR036435">
    <property type="entry name" value="Leukocidin/porin_MspA_sf"/>
</dbReference>
<dbReference type="InterPro" id="IPR015286">
    <property type="entry name" value="Porin_fam_mycobact-type"/>
</dbReference>
<dbReference type="Pfam" id="PF09203">
    <property type="entry name" value="MspA"/>
    <property type="match status" value="1"/>
</dbReference>
<dbReference type="SUPFAM" id="SSF56959">
    <property type="entry name" value="Leukocidin-like"/>
    <property type="match status" value="1"/>
</dbReference>
<feature type="signal peptide" evidence="5">
    <location>
        <begin position="1"/>
        <end position="31"/>
    </location>
</feature>
<feature type="chain" id="PRO_0000415940" description="Porin MspB">
    <location>
        <begin position="32"/>
        <end position="215"/>
    </location>
</feature>
<gene>
    <name type="primary">mspB</name>
    <name type="ordered locus">MSMEG_0520</name>
    <name type="ordered locus">MSMEI_0507</name>
</gene>
<evidence type="ECO:0000250" key="1"/>
<evidence type="ECO:0000269" key="2">
    <source>
    </source>
</evidence>
<evidence type="ECO:0000269" key="3">
    <source>
    </source>
</evidence>
<evidence type="ECO:0000305" key="4"/>
<evidence type="ECO:0000305" key="5">
    <source>
    </source>
</evidence>
<keyword id="KW-0998">Cell outer membrane</keyword>
<keyword id="KW-0134">Cell wall</keyword>
<keyword id="KW-0903">Direct protein sequencing</keyword>
<keyword id="KW-0406">Ion transport</keyword>
<keyword id="KW-0472">Membrane</keyword>
<keyword id="KW-0626">Porin</keyword>
<keyword id="KW-1185">Reference proteome</keyword>
<keyword id="KW-0964">Secreted</keyword>
<keyword id="KW-0732">Signal</keyword>
<keyword id="KW-0812">Transmembrane</keyword>
<keyword id="KW-1134">Transmembrane beta strand</keyword>
<keyword id="KW-0813">Transport</keyword>
<organism>
    <name type="scientific">Mycolicibacterium smegmatis (strain ATCC 700084 / mc(2)155)</name>
    <name type="common">Mycobacterium smegmatis</name>
    <dbReference type="NCBI Taxonomy" id="246196"/>
    <lineage>
        <taxon>Bacteria</taxon>
        <taxon>Bacillati</taxon>
        <taxon>Actinomycetota</taxon>
        <taxon>Actinomycetes</taxon>
        <taxon>Mycobacteriales</taxon>
        <taxon>Mycobacteriaceae</taxon>
        <taxon>Mycolicibacterium</taxon>
    </lineage>
</organism>
<proteinExistence type="evidence at protein level"/>
<sequence length="215" mass="22462">MTAFKRVLIAMISALLAGTTGMFVSAGAAHAGLDNELSLVDGQDRTLTVQQWDTFLNGVFPLDRNRLTREWFHSGRAKYIVAGPGADEFEGTLELGYQIGFPWSLGVGINFSYTTPNILIDDGDITAPPFGLNSVITPNLFPGVSISADLGNGPGIQEVATFSVDVSGPAGGVAVSNAHGTVTGAAGGVLLRPFARLIASTGDSVTTYGEPWNMN</sequence>
<name>MSPB_MYCS2</name>
<accession>A0QPU4</accession>
<accession>I7FDK5</accession>
<comment type="function">
    <text evidence="2 3">A backup porin induced when MspA, the major porin, is deleted. Probably forms a water-filled channel which favors the permeation of cations. There are about 2400 porins in wild-type, 800 in an mspA deletion and 150 in a double mspA-mspC deletion. A triple mspA-mspC-mspD deletion mutant has low but detectable channel activity. Different conductance values with maxima at 2.3 and 4.6 nanosiemens might be caused by a simultaneous reconstitution of MspB channels into the membrane or by the existence of different MspB conformations.</text>
</comment>
<comment type="subunit">
    <text evidence="1">Octamers. Probably forms a goblet with the wide end on the exterior of the outer membrane and a central channel. It is not known if mixed oligomers of MspB with other Msp subunits form in vivo (By similarity).</text>
</comment>
<comment type="subcellular location">
    <subcellularLocation>
        <location evidence="1">Cell outer membrane</location>
    </subcellularLocation>
    <subcellularLocation>
        <location evidence="2">Secreted</location>
        <location evidence="2">Cell wall</location>
    </subcellularLocation>
</comment>
<comment type="induction">
    <text evidence="3">Not expressed in wild-type cells, it is induced in an mspA deletion mutant.</text>
</comment>
<comment type="mass spectrometry" mass="19406.0" method="MALDI" evidence="2"/>
<comment type="disruption phenotype">
    <text evidence="3">Single deletion is viable, and shows no effects on glucose uptake.</text>
</comment>
<comment type="similarity">
    <text evidence="4">Belongs to the mycobacterial porin (TC 1.B.24) family.</text>
</comment>
<comment type="caution">
    <text evidence="4">It is not clear if the data in PubMed:11309127 refer to MspB or MspC as they are nearly identical.</text>
</comment>
<protein>
    <recommendedName>
        <fullName>Porin MspB</fullName>
    </recommendedName>
</protein>
<reference key="1">
    <citation type="submission" date="2006-10" db="EMBL/GenBank/DDBJ databases">
        <authorList>
            <person name="Fleischmann R.D."/>
            <person name="Dodson R.J."/>
            <person name="Haft D.H."/>
            <person name="Merkel J.S."/>
            <person name="Nelson W.C."/>
            <person name="Fraser C.M."/>
        </authorList>
    </citation>
    <scope>NUCLEOTIDE SEQUENCE [LARGE SCALE GENOMIC DNA]</scope>
    <source>
        <strain>ATCC 700084 / mc(2)155</strain>
    </source>
</reference>
<reference key="2">
    <citation type="journal article" date="2007" name="Genome Biol.">
        <title>Interrupted coding sequences in Mycobacterium smegmatis: authentic mutations or sequencing errors?</title>
        <authorList>
            <person name="Deshayes C."/>
            <person name="Perrodou E."/>
            <person name="Gallien S."/>
            <person name="Euphrasie D."/>
            <person name="Schaeffer C."/>
            <person name="Van-Dorsselaer A."/>
            <person name="Poch O."/>
            <person name="Lecompte O."/>
            <person name="Reyrat J.-M."/>
        </authorList>
    </citation>
    <scope>NUCLEOTIDE SEQUENCE [LARGE SCALE GENOMIC DNA]</scope>
    <source>
        <strain>ATCC 700084 / mc(2)155</strain>
    </source>
</reference>
<reference key="3">
    <citation type="journal article" date="2009" name="Genome Res.">
        <title>Ortho-proteogenomics: multiple proteomes investigation through orthology and a new MS-based protocol.</title>
        <authorList>
            <person name="Gallien S."/>
            <person name="Perrodou E."/>
            <person name="Carapito C."/>
            <person name="Deshayes C."/>
            <person name="Reyrat J.-M."/>
            <person name="Van Dorsselaer A."/>
            <person name="Poch O."/>
            <person name="Schaeffer C."/>
            <person name="Lecompte O."/>
        </authorList>
    </citation>
    <scope>NUCLEOTIDE SEQUENCE [LARGE SCALE GENOMIC DNA]</scope>
    <source>
        <strain>ATCC 700084 / mc(2)155</strain>
    </source>
</reference>
<reference key="4">
    <citation type="journal article" date="2001" name="Mol. Microbiol.">
        <title>MspA provides the main hydrophilic pathway through the cell wall of Mycobacterium smegmatis.</title>
        <authorList>
            <person name="Stahl C."/>
            <person name="Kubetzko S."/>
            <person name="Kaps I."/>
            <person name="Seeber S."/>
            <person name="Engelhardt H."/>
            <person name="Niederweis M."/>
        </authorList>
    </citation>
    <scope>PROTEIN SEQUENCE OF 32-51 AND 210-214</scope>
    <scope>FUNCTION AS A PORIN</scope>
    <scope>MASS SPECTROMETRY</scope>
    <scope>SUBCELLULAR LOCATION IN CELL WALL</scope>
    <source>
        <strain>ATCC 700084 / mc(2)155</strain>
    </source>
</reference>
<reference key="5">
    <citation type="journal article" date="2005" name="Mol. Microbiol.">
        <title>The growth rate of Mycobacterium smegmatis depends on sufficient porin-mediated influx of nutrients.</title>
        <authorList>
            <person name="Stephan J."/>
            <person name="Bender J."/>
            <person name="Wolschendorf F."/>
            <person name="Hoffmann C."/>
            <person name="Roth E."/>
            <person name="Mailander C."/>
            <person name="Engelhardt H."/>
            <person name="Niederweis M."/>
        </authorList>
    </citation>
    <scope>FUNCTION AS A PORIN</scope>
    <scope>INDUCTION</scope>
    <scope>DISRUPTION PHENOTYPE</scope>
    <source>
        <strain>ATCC 700084 / mc(2)155</strain>
    </source>
</reference>